<comment type="function">
    <text evidence="1">Together with the alpha chain CGA constitutes follitropin, the follicle-stimulating hormone, and provides its biological specificity to the hormone heterodimer. Binds FSHR, a G protein-coupled receptor, on target cells to activate downstream signaling pathways. Follitropin is involved in follicle development and spermatogenesis in reproductive organs.</text>
</comment>
<comment type="subunit">
    <text evidence="1">Heterodimer. The active follitropin is a heterodimer composed of an alpha chain/CGA shared with other hormones and a unique beta chain/FSHB shown here.</text>
</comment>
<comment type="subcellular location">
    <subcellularLocation>
        <location evidence="1">Secreted</location>
    </subcellularLocation>
    <text evidence="1">Efficient secretion requires dimerization with CGA.</text>
</comment>
<comment type="similarity">
    <text evidence="3">Belongs to the glycoprotein hormones subunit beta family.</text>
</comment>
<proteinExistence type="evidence at protein level"/>
<gene>
    <name type="primary">FSHB</name>
</gene>
<feature type="signal peptide" evidence="2">
    <location>
        <begin position="1"/>
        <end position="19"/>
    </location>
</feature>
<feature type="chain" id="PRO_0000011717" description="Follitropin subunit beta">
    <location>
        <begin position="20"/>
        <end position="129"/>
    </location>
</feature>
<feature type="glycosylation site" description="N-linked (GlcNAc...) asparagine" evidence="1">
    <location>
        <position position="25"/>
    </location>
</feature>
<feature type="glycosylation site" description="N-linked (GlcNAc...) asparagine" evidence="1">
    <location>
        <position position="42"/>
    </location>
</feature>
<feature type="disulfide bond" evidence="1">
    <location>
        <begin position="21"/>
        <end position="69"/>
    </location>
</feature>
<feature type="disulfide bond" evidence="1">
    <location>
        <begin position="35"/>
        <end position="84"/>
    </location>
</feature>
<feature type="disulfide bond" evidence="1">
    <location>
        <begin position="38"/>
        <end position="122"/>
    </location>
</feature>
<feature type="disulfide bond" evidence="1">
    <location>
        <begin position="46"/>
        <end position="100"/>
    </location>
</feature>
<feature type="disulfide bond" evidence="1">
    <location>
        <begin position="50"/>
        <end position="102"/>
    </location>
</feature>
<feature type="disulfide bond" evidence="1">
    <location>
        <begin position="105"/>
        <end position="112"/>
    </location>
</feature>
<feature type="sequence conflict" description="In Ref. 3; AA sequence." evidence="3" ref="3">
    <original>A</original>
    <variation>T</variation>
    <location>
        <position position="68"/>
    </location>
</feature>
<feature type="sequence conflict" description="In Ref. 3; AA sequence." evidence="3" ref="3">
    <original>R</original>
    <variation>T</variation>
    <location>
        <position position="107"/>
    </location>
</feature>
<feature type="sequence conflict" description="In Ref. 3; AA sequence." evidence="3" ref="3">
    <original>RE</original>
    <variation>ERZ</variation>
    <location>
        <begin position="128"/>
        <end position="129"/>
    </location>
</feature>
<accession>P01227</accession>
<evidence type="ECO:0000250" key="1">
    <source>
        <dbReference type="UniProtKB" id="P01225"/>
    </source>
</evidence>
<evidence type="ECO:0000269" key="2">
    <source>
    </source>
</evidence>
<evidence type="ECO:0000305" key="3"/>
<protein>
    <recommendedName>
        <fullName>Follitropin subunit beta</fullName>
    </recommendedName>
    <alternativeName>
        <fullName>Follicle-stimulating hormone beta subunit</fullName>
        <shortName>FSH-B</shortName>
        <shortName>FSH-beta</shortName>
    </alternativeName>
    <alternativeName>
        <fullName>Follitropin beta chain</fullName>
    </alternativeName>
</protein>
<reference key="1">
    <citation type="journal article" date="1989" name="Nucleic Acids Res.">
        <title>Cloning and DNA sequence analysis of the cDNA for the precursor of ovine follicle stimulating hormone beta-subunit.</title>
        <authorList>
            <person name="Mountford P.S."/>
            <person name="Bello P.A."/>
            <person name="Brandon M.R."/>
            <person name="Adams T.E."/>
        </authorList>
    </citation>
    <scope>NUCLEOTIDE SEQUENCE [MRNA]</scope>
</reference>
<reference key="2">
    <citation type="journal article" date="1991" name="DNA Cell Biol.">
        <title>The gene encoding ovine follicle-stimulating hormone beta: isolation, characterization, and comparison to a related ovine genomic sequence.</title>
        <authorList>
            <person name="Guzman K."/>
            <person name="Miller C.D."/>
            <person name="Phillips C.L."/>
            <person name="Miller W.L."/>
        </authorList>
    </citation>
    <scope>NUCLEOTIDE SEQUENCE [GENOMIC DNA]</scope>
</reference>
<reference key="3">
    <citation type="journal article" date="1981" name="Biochem. J.">
        <title>Primary structure of the ovine pituitary follitropin beta-subunit.</title>
        <authorList>
            <person name="Sairam M.R."/>
            <person name="Seidah N.G."/>
            <person name="Chretien M."/>
        </authorList>
    </citation>
    <scope>PROTEIN SEQUENCE OF 20-129</scope>
</reference>
<keyword id="KW-0903">Direct protein sequencing</keyword>
<keyword id="KW-1015">Disulfide bond</keyword>
<keyword id="KW-0325">Glycoprotein</keyword>
<keyword id="KW-0372">Hormone</keyword>
<keyword id="KW-1185">Reference proteome</keyword>
<keyword id="KW-0964">Secreted</keyword>
<keyword id="KW-0732">Signal</keyword>
<dbReference type="EMBL" id="X15493">
    <property type="protein sequence ID" value="CAA33516.1"/>
    <property type="molecule type" value="mRNA"/>
</dbReference>
<dbReference type="EMBL" id="S64745">
    <property type="protein sequence ID" value="AAB20317.1"/>
    <property type="molecule type" value="Genomic_DNA"/>
</dbReference>
<dbReference type="PIR" id="A40410">
    <property type="entry name" value="FTSHB"/>
</dbReference>
<dbReference type="RefSeq" id="NP_001009798.1">
    <property type="nucleotide sequence ID" value="NM_001009798.1"/>
</dbReference>
<dbReference type="SMR" id="P01227"/>
<dbReference type="STRING" id="9940.ENSOARP00000016546"/>
<dbReference type="GlyCosmos" id="P01227">
    <property type="glycosylation" value="2 sites, No reported glycans"/>
</dbReference>
<dbReference type="PaxDb" id="9940-ENSOARP00000016546"/>
<dbReference type="Ensembl" id="ENSOART00020070677">
    <property type="protein sequence ID" value="ENSOARP00020063318"/>
    <property type="gene ID" value="ENSOARG00020035627"/>
</dbReference>
<dbReference type="Ensembl" id="ENSOART00180056379">
    <property type="protein sequence ID" value="ENSOARP00180029900"/>
    <property type="gene ID" value="ENSOARG00180033605"/>
</dbReference>
<dbReference type="Ensembl" id="ENSOART00185050812">
    <property type="protein sequence ID" value="ENSOARP00185025802"/>
    <property type="gene ID" value="ENSOARG00185030583"/>
</dbReference>
<dbReference type="Ensembl" id="ENSOART00215025741">
    <property type="protein sequence ID" value="ENSOARP00215013502"/>
    <property type="gene ID" value="ENSOARG00215015316"/>
</dbReference>
<dbReference type="Ensembl" id="ENSOART00220066844">
    <property type="protein sequence ID" value="ENSOARP00220035807"/>
    <property type="gene ID" value="ENSOARG00220040331"/>
</dbReference>
<dbReference type="Ensembl" id="ENSOART00225074502">
    <property type="protein sequence ID" value="ENSOARP00225037858"/>
    <property type="gene ID" value="ENSOARG00225044995"/>
</dbReference>
<dbReference type="Ensembl" id="ENSOART00260027763">
    <property type="protein sequence ID" value="ENSOARP00260013841"/>
    <property type="gene ID" value="ENSOARG00260017179"/>
</dbReference>
<dbReference type="GeneID" id="443387"/>
<dbReference type="KEGG" id="oas:443387"/>
<dbReference type="CTD" id="2488"/>
<dbReference type="eggNOG" id="ENOG502S39C">
    <property type="taxonomic scope" value="Eukaryota"/>
</dbReference>
<dbReference type="HOGENOM" id="CLU_126319_3_0_1"/>
<dbReference type="OMA" id="PVATGCH"/>
<dbReference type="OrthoDB" id="8453657at2759"/>
<dbReference type="Proteomes" id="UP000002356">
    <property type="component" value="Chromosome 15"/>
</dbReference>
<dbReference type="Bgee" id="ENSOARG00000015425">
    <property type="expression patterns" value="Expressed in pituitary gland and 1 other cell type or tissue"/>
</dbReference>
<dbReference type="GO" id="GO:0005737">
    <property type="term" value="C:cytoplasm"/>
    <property type="evidence" value="ECO:0007669"/>
    <property type="project" value="Ensembl"/>
</dbReference>
<dbReference type="GO" id="GO:0005615">
    <property type="term" value="C:extracellular space"/>
    <property type="evidence" value="ECO:0000250"/>
    <property type="project" value="UniProtKB"/>
</dbReference>
<dbReference type="GO" id="GO:0016914">
    <property type="term" value="C:follicle-stimulating hormone complex"/>
    <property type="evidence" value="ECO:0000250"/>
    <property type="project" value="UniProtKB"/>
</dbReference>
<dbReference type="GO" id="GO:0016913">
    <property type="term" value="F:follicle-stimulating hormone activity"/>
    <property type="evidence" value="ECO:0000250"/>
    <property type="project" value="UniProtKB"/>
</dbReference>
<dbReference type="GO" id="GO:0035938">
    <property type="term" value="P:estradiol secretion"/>
    <property type="evidence" value="ECO:0000315"/>
    <property type="project" value="AgBase"/>
</dbReference>
<dbReference type="GO" id="GO:0042699">
    <property type="term" value="P:follicle-stimulating hormone signaling pathway"/>
    <property type="evidence" value="ECO:0007669"/>
    <property type="project" value="Ensembl"/>
</dbReference>
<dbReference type="GO" id="GO:0007186">
    <property type="term" value="P:G protein-coupled receptor signaling pathway"/>
    <property type="evidence" value="ECO:0000250"/>
    <property type="project" value="UniProtKB"/>
</dbReference>
<dbReference type="GO" id="GO:0045780">
    <property type="term" value="P:positive regulation of bone resorption"/>
    <property type="evidence" value="ECO:0007669"/>
    <property type="project" value="Ensembl"/>
</dbReference>
<dbReference type="GO" id="GO:0010628">
    <property type="term" value="P:positive regulation of gene expression"/>
    <property type="evidence" value="ECO:0007669"/>
    <property type="project" value="Ensembl"/>
</dbReference>
<dbReference type="GO" id="GO:0010893">
    <property type="term" value="P:positive regulation of steroid biosynthetic process"/>
    <property type="evidence" value="ECO:0007669"/>
    <property type="project" value="Ensembl"/>
</dbReference>
<dbReference type="GO" id="GO:0045670">
    <property type="term" value="P:regulation of osteoclast differentiation"/>
    <property type="evidence" value="ECO:0007669"/>
    <property type="project" value="Ensembl"/>
</dbReference>
<dbReference type="GO" id="GO:0010469">
    <property type="term" value="P:regulation of signaling receptor activity"/>
    <property type="evidence" value="ECO:0000250"/>
    <property type="project" value="UniProtKB"/>
</dbReference>
<dbReference type="GO" id="GO:0060011">
    <property type="term" value="P:Sertoli cell proliferation"/>
    <property type="evidence" value="ECO:0007669"/>
    <property type="project" value="Ensembl"/>
</dbReference>
<dbReference type="GO" id="GO:0007283">
    <property type="term" value="P:spermatogenesis"/>
    <property type="evidence" value="ECO:0007669"/>
    <property type="project" value="Ensembl"/>
</dbReference>
<dbReference type="GO" id="GO:0007179">
    <property type="term" value="P:transforming growth factor beta receptor signaling pathway"/>
    <property type="evidence" value="ECO:0007669"/>
    <property type="project" value="Ensembl"/>
</dbReference>
<dbReference type="CDD" id="cd00069">
    <property type="entry name" value="GHB_like"/>
    <property type="match status" value="1"/>
</dbReference>
<dbReference type="FunFam" id="2.10.90.10:FF:000007">
    <property type="entry name" value="Luteinizing hormone beta subunit"/>
    <property type="match status" value="1"/>
</dbReference>
<dbReference type="Gene3D" id="2.10.90.10">
    <property type="entry name" value="Cystine-knot cytokines"/>
    <property type="match status" value="1"/>
</dbReference>
<dbReference type="InterPro" id="IPR029034">
    <property type="entry name" value="Cystine-knot_cytokine"/>
</dbReference>
<dbReference type="InterPro" id="IPR006208">
    <property type="entry name" value="Glyco_hormone_CN"/>
</dbReference>
<dbReference type="InterPro" id="IPR001545">
    <property type="entry name" value="Gonadotropin_bsu"/>
</dbReference>
<dbReference type="InterPro" id="IPR018245">
    <property type="entry name" value="Gonadotropin_bsu_CS"/>
</dbReference>
<dbReference type="PANTHER" id="PTHR11515:SF17">
    <property type="entry name" value="FOLLITROPIN SUBUNIT BETA"/>
    <property type="match status" value="1"/>
</dbReference>
<dbReference type="PANTHER" id="PTHR11515">
    <property type="entry name" value="GLYCOPROTEIN HORMONE BETA CHAIN"/>
    <property type="match status" value="1"/>
</dbReference>
<dbReference type="Pfam" id="PF00007">
    <property type="entry name" value="Cys_knot"/>
    <property type="match status" value="1"/>
</dbReference>
<dbReference type="SMART" id="SM00068">
    <property type="entry name" value="GHB"/>
    <property type="match status" value="1"/>
</dbReference>
<dbReference type="SUPFAM" id="SSF57501">
    <property type="entry name" value="Cystine-knot cytokines"/>
    <property type="match status" value="1"/>
</dbReference>
<dbReference type="PROSITE" id="PS00261">
    <property type="entry name" value="GLYCO_HORMONE_BETA_1"/>
    <property type="match status" value="1"/>
</dbReference>
<dbReference type="PROSITE" id="PS00689">
    <property type="entry name" value="GLYCO_HORMONE_BETA_2"/>
    <property type="match status" value="1"/>
</dbReference>
<name>FSHB_SHEEP</name>
<sequence>MKSVQFCFLFCCWRAICCRSCELTNITITVEKEECSFCISINTTWCAGYCYTRDLVYKDPARPNIQKACTFKELVYETVKVPGCAHHADSLYTYPVATECHCGKCDRDSTDCTVRGLGPSYCSFSDIRE</sequence>
<organism>
    <name type="scientific">Ovis aries</name>
    <name type="common">Sheep</name>
    <dbReference type="NCBI Taxonomy" id="9940"/>
    <lineage>
        <taxon>Eukaryota</taxon>
        <taxon>Metazoa</taxon>
        <taxon>Chordata</taxon>
        <taxon>Craniata</taxon>
        <taxon>Vertebrata</taxon>
        <taxon>Euteleostomi</taxon>
        <taxon>Mammalia</taxon>
        <taxon>Eutheria</taxon>
        <taxon>Laurasiatheria</taxon>
        <taxon>Artiodactyla</taxon>
        <taxon>Ruminantia</taxon>
        <taxon>Pecora</taxon>
        <taxon>Bovidae</taxon>
        <taxon>Caprinae</taxon>
        <taxon>Ovis</taxon>
    </lineage>
</organism>